<name>RS8_YERPN</name>
<reference key="1">
    <citation type="journal article" date="2006" name="J. Bacteriol.">
        <title>Complete genome sequence of Yersinia pestis strains Antiqua and Nepal516: evidence of gene reduction in an emerging pathogen.</title>
        <authorList>
            <person name="Chain P.S.G."/>
            <person name="Hu P."/>
            <person name="Malfatti S.A."/>
            <person name="Radnedge L."/>
            <person name="Larimer F."/>
            <person name="Vergez L.M."/>
            <person name="Worsham P."/>
            <person name="Chu M.C."/>
            <person name="Andersen G.L."/>
        </authorList>
    </citation>
    <scope>NUCLEOTIDE SEQUENCE [LARGE SCALE GENOMIC DNA]</scope>
    <source>
        <strain>Nepal516</strain>
    </source>
</reference>
<reference key="2">
    <citation type="submission" date="2009-04" db="EMBL/GenBank/DDBJ databases">
        <title>Yersinia pestis Nepal516A whole genome shotgun sequencing project.</title>
        <authorList>
            <person name="Plunkett G. III"/>
            <person name="Anderson B.D."/>
            <person name="Baumler D.J."/>
            <person name="Burland V."/>
            <person name="Cabot E.L."/>
            <person name="Glasner J.D."/>
            <person name="Mau B."/>
            <person name="Neeno-Eckwall E."/>
            <person name="Perna N.T."/>
            <person name="Munk A.C."/>
            <person name="Tapia R."/>
            <person name="Green L.D."/>
            <person name="Rogers Y.C."/>
            <person name="Detter J.C."/>
            <person name="Bruce D.C."/>
            <person name="Brettin T.S."/>
        </authorList>
    </citation>
    <scope>NUCLEOTIDE SEQUENCE [LARGE SCALE GENOMIC DNA]</scope>
    <source>
        <strain>Nepal516</strain>
    </source>
</reference>
<organism>
    <name type="scientific">Yersinia pestis bv. Antiqua (strain Nepal516)</name>
    <dbReference type="NCBI Taxonomy" id="377628"/>
    <lineage>
        <taxon>Bacteria</taxon>
        <taxon>Pseudomonadati</taxon>
        <taxon>Pseudomonadota</taxon>
        <taxon>Gammaproteobacteria</taxon>
        <taxon>Enterobacterales</taxon>
        <taxon>Yersiniaceae</taxon>
        <taxon>Yersinia</taxon>
    </lineage>
</organism>
<proteinExistence type="inferred from homology"/>
<gene>
    <name evidence="1" type="primary">rpsH</name>
    <name type="ordered locus">YPN_3845</name>
    <name type="ORF">YP516_4368</name>
</gene>
<dbReference type="EMBL" id="CP000305">
    <property type="protein sequence ID" value="ABG20172.1"/>
    <property type="molecule type" value="Genomic_DNA"/>
</dbReference>
<dbReference type="EMBL" id="ACNQ01000019">
    <property type="protein sequence ID" value="EEO74760.1"/>
    <property type="molecule type" value="Genomic_DNA"/>
</dbReference>
<dbReference type="RefSeq" id="WP_002213332.1">
    <property type="nucleotide sequence ID" value="NZ_ACNQ01000019.1"/>
</dbReference>
<dbReference type="SMR" id="Q1CCV8"/>
<dbReference type="GeneID" id="96663182"/>
<dbReference type="KEGG" id="ypn:YPN_3845"/>
<dbReference type="HOGENOM" id="CLU_098428_0_0_6"/>
<dbReference type="Proteomes" id="UP000008936">
    <property type="component" value="Chromosome"/>
</dbReference>
<dbReference type="GO" id="GO:1990904">
    <property type="term" value="C:ribonucleoprotein complex"/>
    <property type="evidence" value="ECO:0007669"/>
    <property type="project" value="UniProtKB-KW"/>
</dbReference>
<dbReference type="GO" id="GO:0005840">
    <property type="term" value="C:ribosome"/>
    <property type="evidence" value="ECO:0007669"/>
    <property type="project" value="UniProtKB-KW"/>
</dbReference>
<dbReference type="GO" id="GO:0019843">
    <property type="term" value="F:rRNA binding"/>
    <property type="evidence" value="ECO:0007669"/>
    <property type="project" value="UniProtKB-UniRule"/>
</dbReference>
<dbReference type="GO" id="GO:0003735">
    <property type="term" value="F:structural constituent of ribosome"/>
    <property type="evidence" value="ECO:0007669"/>
    <property type="project" value="InterPro"/>
</dbReference>
<dbReference type="GO" id="GO:0006412">
    <property type="term" value="P:translation"/>
    <property type="evidence" value="ECO:0007669"/>
    <property type="project" value="UniProtKB-UniRule"/>
</dbReference>
<dbReference type="FunFam" id="3.30.1370.30:FF:000003">
    <property type="entry name" value="30S ribosomal protein S8"/>
    <property type="match status" value="1"/>
</dbReference>
<dbReference type="FunFam" id="3.30.1490.10:FF:000001">
    <property type="entry name" value="30S ribosomal protein S8"/>
    <property type="match status" value="1"/>
</dbReference>
<dbReference type="Gene3D" id="3.30.1370.30">
    <property type="match status" value="1"/>
</dbReference>
<dbReference type="Gene3D" id="3.30.1490.10">
    <property type="match status" value="1"/>
</dbReference>
<dbReference type="HAMAP" id="MF_01302_B">
    <property type="entry name" value="Ribosomal_uS8_B"/>
    <property type="match status" value="1"/>
</dbReference>
<dbReference type="InterPro" id="IPR000630">
    <property type="entry name" value="Ribosomal_uS8"/>
</dbReference>
<dbReference type="InterPro" id="IPR047863">
    <property type="entry name" value="Ribosomal_uS8_CS"/>
</dbReference>
<dbReference type="InterPro" id="IPR035987">
    <property type="entry name" value="Ribosomal_uS8_sf"/>
</dbReference>
<dbReference type="NCBIfam" id="NF001109">
    <property type="entry name" value="PRK00136.1"/>
    <property type="match status" value="1"/>
</dbReference>
<dbReference type="PANTHER" id="PTHR11758">
    <property type="entry name" value="40S RIBOSOMAL PROTEIN S15A"/>
    <property type="match status" value="1"/>
</dbReference>
<dbReference type="Pfam" id="PF00410">
    <property type="entry name" value="Ribosomal_S8"/>
    <property type="match status" value="1"/>
</dbReference>
<dbReference type="SUPFAM" id="SSF56047">
    <property type="entry name" value="Ribosomal protein S8"/>
    <property type="match status" value="1"/>
</dbReference>
<dbReference type="PROSITE" id="PS00053">
    <property type="entry name" value="RIBOSOMAL_S8"/>
    <property type="match status" value="1"/>
</dbReference>
<feature type="chain" id="PRO_0000290964" description="Small ribosomal subunit protein uS8">
    <location>
        <begin position="1"/>
        <end position="130"/>
    </location>
</feature>
<comment type="function">
    <text evidence="1">One of the primary rRNA binding proteins, it binds directly to 16S rRNA central domain where it helps coordinate assembly of the platform of the 30S subunit.</text>
</comment>
<comment type="subunit">
    <text evidence="1">Part of the 30S ribosomal subunit. Contacts proteins S5 and S12.</text>
</comment>
<comment type="similarity">
    <text evidence="1">Belongs to the universal ribosomal protein uS8 family.</text>
</comment>
<evidence type="ECO:0000255" key="1">
    <source>
        <dbReference type="HAMAP-Rule" id="MF_01302"/>
    </source>
</evidence>
<evidence type="ECO:0000305" key="2"/>
<sequence>MSMQDPIADMLTRIRNGQAANKVAVTMPSSKLKVAIANVLKEEGFIEDFKIEGDTKPVLELALKYFQGKAVVESIQRISRPGLRIYKKKDELPKVMAGLGIAVISTSKGVMTDRAARQAGLGGEIICYVA</sequence>
<keyword id="KW-0687">Ribonucleoprotein</keyword>
<keyword id="KW-0689">Ribosomal protein</keyword>
<keyword id="KW-0694">RNA-binding</keyword>
<keyword id="KW-0699">rRNA-binding</keyword>
<protein>
    <recommendedName>
        <fullName evidence="1">Small ribosomal subunit protein uS8</fullName>
    </recommendedName>
    <alternativeName>
        <fullName evidence="2">30S ribosomal protein S8</fullName>
    </alternativeName>
</protein>
<accession>Q1CCV8</accession>
<accession>D1Q2K7</accession>